<keyword id="KW-0030">Aminoacyl-tRNA synthetase</keyword>
<keyword id="KW-0067">ATP-binding</keyword>
<keyword id="KW-0963">Cytoplasm</keyword>
<keyword id="KW-0436">Ligase</keyword>
<keyword id="KW-0479">Metal-binding</keyword>
<keyword id="KW-0547">Nucleotide-binding</keyword>
<keyword id="KW-0648">Protein biosynthesis</keyword>
<keyword id="KW-1185">Reference proteome</keyword>
<keyword id="KW-0862">Zinc</keyword>
<dbReference type="EC" id="6.1.1.16" evidence="1"/>
<dbReference type="EMBL" id="CT971583">
    <property type="protein sequence ID" value="CAK24044.1"/>
    <property type="molecule type" value="Genomic_DNA"/>
</dbReference>
<dbReference type="SMR" id="A5GM79"/>
<dbReference type="STRING" id="32051.SynWH7803_1618"/>
<dbReference type="KEGG" id="syx:SynWH7803_1618"/>
<dbReference type="eggNOG" id="COG0215">
    <property type="taxonomic scope" value="Bacteria"/>
</dbReference>
<dbReference type="HOGENOM" id="CLU_013528_0_1_3"/>
<dbReference type="OrthoDB" id="9815130at2"/>
<dbReference type="Proteomes" id="UP000001566">
    <property type="component" value="Chromosome"/>
</dbReference>
<dbReference type="GO" id="GO:0005829">
    <property type="term" value="C:cytosol"/>
    <property type="evidence" value="ECO:0007669"/>
    <property type="project" value="TreeGrafter"/>
</dbReference>
<dbReference type="GO" id="GO:0005524">
    <property type="term" value="F:ATP binding"/>
    <property type="evidence" value="ECO:0007669"/>
    <property type="project" value="UniProtKB-UniRule"/>
</dbReference>
<dbReference type="GO" id="GO:0004817">
    <property type="term" value="F:cysteine-tRNA ligase activity"/>
    <property type="evidence" value="ECO:0007669"/>
    <property type="project" value="UniProtKB-UniRule"/>
</dbReference>
<dbReference type="GO" id="GO:0008270">
    <property type="term" value="F:zinc ion binding"/>
    <property type="evidence" value="ECO:0007669"/>
    <property type="project" value="UniProtKB-UniRule"/>
</dbReference>
<dbReference type="GO" id="GO:0006423">
    <property type="term" value="P:cysteinyl-tRNA aminoacylation"/>
    <property type="evidence" value="ECO:0007669"/>
    <property type="project" value="UniProtKB-UniRule"/>
</dbReference>
<dbReference type="CDD" id="cd00672">
    <property type="entry name" value="CysRS_core"/>
    <property type="match status" value="1"/>
</dbReference>
<dbReference type="FunFam" id="3.40.50.620:FF:000009">
    <property type="entry name" value="Cysteine--tRNA ligase"/>
    <property type="match status" value="1"/>
</dbReference>
<dbReference type="Gene3D" id="1.20.120.1910">
    <property type="entry name" value="Cysteine-tRNA ligase, C-terminal anti-codon recognition domain"/>
    <property type="match status" value="1"/>
</dbReference>
<dbReference type="Gene3D" id="3.40.50.620">
    <property type="entry name" value="HUPs"/>
    <property type="match status" value="1"/>
</dbReference>
<dbReference type="HAMAP" id="MF_00041">
    <property type="entry name" value="Cys_tRNA_synth"/>
    <property type="match status" value="1"/>
</dbReference>
<dbReference type="InterPro" id="IPR015803">
    <property type="entry name" value="Cys-tRNA-ligase"/>
</dbReference>
<dbReference type="InterPro" id="IPR015273">
    <property type="entry name" value="Cys-tRNA-synt_Ia_DALR"/>
</dbReference>
<dbReference type="InterPro" id="IPR024909">
    <property type="entry name" value="Cys-tRNA/MSH_ligase"/>
</dbReference>
<dbReference type="InterPro" id="IPR014729">
    <property type="entry name" value="Rossmann-like_a/b/a_fold"/>
</dbReference>
<dbReference type="InterPro" id="IPR032678">
    <property type="entry name" value="tRNA-synt_1_cat_dom"/>
</dbReference>
<dbReference type="InterPro" id="IPR009080">
    <property type="entry name" value="tRNAsynth_Ia_anticodon-bd"/>
</dbReference>
<dbReference type="NCBIfam" id="TIGR00435">
    <property type="entry name" value="cysS"/>
    <property type="match status" value="1"/>
</dbReference>
<dbReference type="PANTHER" id="PTHR10890:SF3">
    <property type="entry name" value="CYSTEINE--TRNA LIGASE, CYTOPLASMIC"/>
    <property type="match status" value="1"/>
</dbReference>
<dbReference type="PANTHER" id="PTHR10890">
    <property type="entry name" value="CYSTEINYL-TRNA SYNTHETASE"/>
    <property type="match status" value="1"/>
</dbReference>
<dbReference type="Pfam" id="PF09190">
    <property type="entry name" value="DALR_2"/>
    <property type="match status" value="1"/>
</dbReference>
<dbReference type="Pfam" id="PF01406">
    <property type="entry name" value="tRNA-synt_1e"/>
    <property type="match status" value="1"/>
</dbReference>
<dbReference type="PRINTS" id="PR00983">
    <property type="entry name" value="TRNASYNTHCYS"/>
</dbReference>
<dbReference type="SMART" id="SM00840">
    <property type="entry name" value="DALR_2"/>
    <property type="match status" value="1"/>
</dbReference>
<dbReference type="SUPFAM" id="SSF47323">
    <property type="entry name" value="Anticodon-binding domain of a subclass of class I aminoacyl-tRNA synthetases"/>
    <property type="match status" value="1"/>
</dbReference>
<dbReference type="SUPFAM" id="SSF52374">
    <property type="entry name" value="Nucleotidylyl transferase"/>
    <property type="match status" value="1"/>
</dbReference>
<sequence>MPVSLRFTNTLTRRTEPFQPLKDGQVSIYCCGVTVYDLCHLGHARSYINWDVLRRYLIWSGYAVTFVQNFTDIDDKILKRAAEEGSSMEAVSERNIDAFHADMDALGILRPDRMPRATRCLEGIRTLIAELEAKGAAYSADGDVYFAVMKHAGYGKLSGRDLADQQTNADGRVADAEEARKQHPFDFALWKGAKAGEPSFPSPWGNGRPGWHIECSAMVREELGDTIDIHLGGADLVFPHHENEIAQSEAATGQELARVWLHNGMVNVGGEKMSKSLGNFTTIRALLESGLSAMTLRLFVLQAHYRKPLDFTAEALEAATTGWKGLNAALSLGDLHAEALGWTPAEPMGNDAVVASESSAIDTLLSARQRFSAAMDDDLNSSGALAVLFELARPLRALANRLDRGDAPNHNDDDGQELLQRWLLLRELAAVLGLRLEHPSAPEEESDLDSQSIEAAIDARRLAKQSKDFAEADRIRAELSAQGIELIDKPGGITEWRRG</sequence>
<reference key="1">
    <citation type="submission" date="2006-05" db="EMBL/GenBank/DDBJ databases">
        <authorList>
            <consortium name="Genoscope"/>
        </authorList>
    </citation>
    <scope>NUCLEOTIDE SEQUENCE [LARGE SCALE GENOMIC DNA]</scope>
    <source>
        <strain>WH7803</strain>
    </source>
</reference>
<evidence type="ECO:0000255" key="1">
    <source>
        <dbReference type="HAMAP-Rule" id="MF_00041"/>
    </source>
</evidence>
<accession>A5GM79</accession>
<protein>
    <recommendedName>
        <fullName evidence="1">Cysteine--tRNA ligase</fullName>
        <ecNumber evidence="1">6.1.1.16</ecNumber>
    </recommendedName>
    <alternativeName>
        <fullName evidence="1">Cysteinyl-tRNA synthetase</fullName>
        <shortName evidence="1">CysRS</shortName>
    </alternativeName>
</protein>
<name>SYC_SYNPW</name>
<gene>
    <name evidence="1" type="primary">cysS</name>
    <name type="ordered locus">SynWH7803_1618</name>
</gene>
<proteinExistence type="inferred from homology"/>
<feature type="chain" id="PRO_0000332910" description="Cysteine--tRNA ligase">
    <location>
        <begin position="1"/>
        <end position="499"/>
    </location>
</feature>
<feature type="short sequence motif" description="'HIGH' region">
    <location>
        <begin position="33"/>
        <end position="43"/>
    </location>
</feature>
<feature type="short sequence motif" description="'KMSKS' region">
    <location>
        <begin position="272"/>
        <end position="276"/>
    </location>
</feature>
<feature type="binding site" evidence="1">
    <location>
        <position position="31"/>
    </location>
    <ligand>
        <name>Zn(2+)</name>
        <dbReference type="ChEBI" id="CHEBI:29105"/>
    </ligand>
</feature>
<feature type="binding site" evidence="1">
    <location>
        <position position="215"/>
    </location>
    <ligand>
        <name>Zn(2+)</name>
        <dbReference type="ChEBI" id="CHEBI:29105"/>
    </ligand>
</feature>
<feature type="binding site" evidence="1">
    <location>
        <position position="240"/>
    </location>
    <ligand>
        <name>Zn(2+)</name>
        <dbReference type="ChEBI" id="CHEBI:29105"/>
    </ligand>
</feature>
<feature type="binding site" evidence="1">
    <location>
        <position position="244"/>
    </location>
    <ligand>
        <name>Zn(2+)</name>
        <dbReference type="ChEBI" id="CHEBI:29105"/>
    </ligand>
</feature>
<feature type="binding site" evidence="1">
    <location>
        <position position="275"/>
    </location>
    <ligand>
        <name>ATP</name>
        <dbReference type="ChEBI" id="CHEBI:30616"/>
    </ligand>
</feature>
<comment type="catalytic activity">
    <reaction evidence="1">
        <text>tRNA(Cys) + L-cysteine + ATP = L-cysteinyl-tRNA(Cys) + AMP + diphosphate</text>
        <dbReference type="Rhea" id="RHEA:17773"/>
        <dbReference type="Rhea" id="RHEA-COMP:9661"/>
        <dbReference type="Rhea" id="RHEA-COMP:9679"/>
        <dbReference type="ChEBI" id="CHEBI:30616"/>
        <dbReference type="ChEBI" id="CHEBI:33019"/>
        <dbReference type="ChEBI" id="CHEBI:35235"/>
        <dbReference type="ChEBI" id="CHEBI:78442"/>
        <dbReference type="ChEBI" id="CHEBI:78517"/>
        <dbReference type="ChEBI" id="CHEBI:456215"/>
        <dbReference type="EC" id="6.1.1.16"/>
    </reaction>
</comment>
<comment type="cofactor">
    <cofactor evidence="1">
        <name>Zn(2+)</name>
        <dbReference type="ChEBI" id="CHEBI:29105"/>
    </cofactor>
    <text evidence="1">Binds 1 zinc ion per subunit.</text>
</comment>
<comment type="subunit">
    <text evidence="1">Monomer.</text>
</comment>
<comment type="subcellular location">
    <subcellularLocation>
        <location evidence="1">Cytoplasm</location>
    </subcellularLocation>
</comment>
<comment type="similarity">
    <text evidence="1">Belongs to the class-I aminoacyl-tRNA synthetase family.</text>
</comment>
<organism>
    <name type="scientific">Synechococcus sp. (strain WH7803)</name>
    <dbReference type="NCBI Taxonomy" id="32051"/>
    <lineage>
        <taxon>Bacteria</taxon>
        <taxon>Bacillati</taxon>
        <taxon>Cyanobacteriota</taxon>
        <taxon>Cyanophyceae</taxon>
        <taxon>Synechococcales</taxon>
        <taxon>Synechococcaceae</taxon>
        <taxon>Synechococcus</taxon>
    </lineage>
</organism>